<name>MVP_TMVKR</name>
<comment type="function">
    <text evidence="2 3">Transports viral genome to neighboring plant cells directly through plasmosdesmata, without any budding. The movement protein allows efficient cell to cell propagation, by bypassing the host cell wall barrier. Forms a ribonucleoprotein complex with viral RNA. Binds microtubules and modulates microtubule stability. Can bind double-stranded DNA. Triggers host hypersensitive defense reaction in incompatible plants harboring resistance (R) proteins.</text>
</comment>
<comment type="subunit">
    <text evidence="1 2 3">Binds to host RBCS at the plasmodesmata; this interaction seems required for viral systemic movement (By similarity). In resistant plants, interacts with host MBP2C at host microtubules; this interaction prevents virus cell to cell movement. In resistant plants, interacts with host resistance (R) protein (e.g. tomato ToMV resistance protein TM-2(2), AC Q71BG9) at the host plasma membrane; this interaction triggers host defense responses leading to programmed cell death (By similarity).</text>
</comment>
<comment type="subcellular location">
    <subcellularLocation>
        <location evidence="3">Host cytoplasm</location>
        <location evidence="3">Host cytoskeleton</location>
    </subcellularLocation>
    <subcellularLocation>
        <location evidence="3">Host cell junction</location>
        <location evidence="3">Host plasmodesma</location>
    </subcellularLocation>
    <text evidence="2 3">Binds to the host cytoskeleton before being transported to the host plasmodesmata. Observed in virus replication complexes (VRCs) of tobamovirus infected host cells (By similarity). In resistant plants, targeted to the host plasma membrane via the interaction with host resistance (R) protein TM-2 (e.g. tomato ToMV resistance protein TM-2(2), AC Q71BG9) (By similarity).</text>
</comment>
<comment type="similarity">
    <text evidence="5">Belongs to the tobamovirus movement protein family.</text>
</comment>
<keyword id="KW-1031">Host cell junction</keyword>
<keyword id="KW-1035">Host cytoplasm</keyword>
<keyword id="KW-1037">Host cytoskeleton</keyword>
<keyword id="KW-0945">Host-virus interaction</keyword>
<keyword id="KW-0694">RNA-binding</keyword>
<keyword id="KW-0813">Transport</keyword>
<keyword id="KW-0916">Viral movement protein</keyword>
<dbReference type="EMBL" id="X68110">
    <property type="status" value="NOT_ANNOTATED_CDS"/>
    <property type="molecule type" value="Genomic_RNA"/>
</dbReference>
<dbReference type="PIR" id="S26359">
    <property type="entry name" value="S26359"/>
</dbReference>
<dbReference type="Proteomes" id="UP000008250">
    <property type="component" value="Genome"/>
</dbReference>
<dbReference type="GO" id="GO:0030430">
    <property type="term" value="C:host cell cytoplasm"/>
    <property type="evidence" value="ECO:0007669"/>
    <property type="project" value="UniProtKB-KW"/>
</dbReference>
<dbReference type="GO" id="GO:0044219">
    <property type="term" value="C:host cell plasmodesma"/>
    <property type="evidence" value="ECO:0007669"/>
    <property type="project" value="UniProtKB-SubCell"/>
</dbReference>
<dbReference type="GO" id="GO:0044163">
    <property type="term" value="C:host cytoskeleton"/>
    <property type="evidence" value="ECO:0000250"/>
    <property type="project" value="UniProtKB"/>
</dbReference>
<dbReference type="GO" id="GO:0003690">
    <property type="term" value="F:double-stranded DNA binding"/>
    <property type="evidence" value="ECO:0000250"/>
    <property type="project" value="UniProtKB"/>
</dbReference>
<dbReference type="GO" id="GO:0003723">
    <property type="term" value="F:RNA binding"/>
    <property type="evidence" value="ECO:0007669"/>
    <property type="project" value="UniProtKB-KW"/>
</dbReference>
<dbReference type="GO" id="GO:0046740">
    <property type="term" value="P:transport of virus in host, cell to cell"/>
    <property type="evidence" value="ECO:0007669"/>
    <property type="project" value="UniProtKB-KW"/>
</dbReference>
<dbReference type="InterPro" id="IPR001022">
    <property type="entry name" value="TMV_movement"/>
</dbReference>
<dbReference type="InterPro" id="IPR028919">
    <property type="entry name" value="Viral_movement"/>
</dbReference>
<dbReference type="Pfam" id="PF01107">
    <property type="entry name" value="MP"/>
    <property type="match status" value="1"/>
</dbReference>
<dbReference type="PRINTS" id="PR00964">
    <property type="entry name" value="MOVEMENT"/>
</dbReference>
<sequence length="268" mass="29961">MALVVKGKVNINEFIDLTKMEKILPSMFTPVKSVMCSKVDKIMVHENESLSEVNLLKGVKLIDSGYVCLAGLVVTGEWNLPDNCRGGVSVCLVDKRMERADEATLGSYYTAAAKKRFQFKVVPNYAITTQDAMKNVWQVLVNIRNVKMSAGFCPLSLEFVSVCIVYRNNIKLGLREKITNVRDGGPMELTEEVVDEFMEDVPMSIRLAKFRSRTGKKSDVRKGKNSSSVRSVPNKNYRNVKDFGGMSFKKNNLIDDDSEATVAESDSF</sequence>
<gene>
    <name type="primary">MP</name>
    <name type="synonym">MP30</name>
</gene>
<feature type="chain" id="PRO_0000144954" description="Movement protein">
    <location>
        <begin position="1"/>
        <end position="268"/>
    </location>
</feature>
<feature type="region of interest" description="Disordered" evidence="4">
    <location>
        <begin position="216"/>
        <end position="238"/>
    </location>
</feature>
<feature type="compositionally biased region" description="Polar residues" evidence="4">
    <location>
        <begin position="225"/>
        <end position="237"/>
    </location>
</feature>
<reference key="1">
    <citation type="journal article" date="1992" name="Nucleic Acids Res.">
        <title>Nucleotide sequence of cDNA of the tobacco mosaic virus RNA isolated in Korea.</title>
        <authorList>
            <person name="Kob K.H."/>
            <person name="Song E.K."/>
            <person name="Lee S.Y."/>
            <person name="Park Y.I."/>
            <person name="Park W.M."/>
        </authorList>
    </citation>
    <scope>NUCLEOTIDE SEQUENCE [GENOMIC RNA]</scope>
</reference>
<proteinExistence type="inferred from homology"/>
<organismHost>
    <name type="scientific">Nicotiana tabacum</name>
    <name type="common">Common tobacco</name>
    <dbReference type="NCBI Taxonomy" id="4097"/>
</organismHost>
<organism>
    <name type="scientific">Tobacco mosaic virus (strain Korean NC 82)</name>
    <name type="common">TMV</name>
    <dbReference type="NCBI Taxonomy" id="31746"/>
    <lineage>
        <taxon>Viruses</taxon>
        <taxon>Riboviria</taxon>
        <taxon>Orthornavirae</taxon>
        <taxon>Kitrinoviricota</taxon>
        <taxon>Alsuviricetes</taxon>
        <taxon>Martellivirales</taxon>
        <taxon>Virgaviridae</taxon>
        <taxon>Tobamovirus</taxon>
        <taxon>Tobacco mosaic virus</taxon>
    </lineage>
</organism>
<protein>
    <recommendedName>
        <fullName>Movement protein</fullName>
    </recommendedName>
    <alternativeName>
        <fullName>30 kDa protein</fullName>
    </alternativeName>
    <alternativeName>
        <fullName>Cell-to-cell transport protein</fullName>
    </alternativeName>
</protein>
<evidence type="ECO:0000250" key="1">
    <source>
        <dbReference type="UniProtKB" id="A0A0S4IJL0"/>
    </source>
</evidence>
<evidence type="ECO:0000250" key="2">
    <source>
        <dbReference type="UniProtKB" id="P03583"/>
    </source>
</evidence>
<evidence type="ECO:0000250" key="3">
    <source>
        <dbReference type="UniProtKB" id="P69513"/>
    </source>
</evidence>
<evidence type="ECO:0000256" key="4">
    <source>
        <dbReference type="SAM" id="MobiDB-lite"/>
    </source>
</evidence>
<evidence type="ECO:0000305" key="5"/>
<accession>P30737</accession>